<organism>
    <name type="scientific">Equine herpesvirus 1 (strain Ab4p)</name>
    <name type="common">EHV-1</name>
    <name type="synonym">Equine abortion virus</name>
    <dbReference type="NCBI Taxonomy" id="31520"/>
    <lineage>
        <taxon>Viruses</taxon>
        <taxon>Duplodnaviria</taxon>
        <taxon>Heunggongvirae</taxon>
        <taxon>Peploviricota</taxon>
        <taxon>Herviviricetes</taxon>
        <taxon>Herpesvirales</taxon>
        <taxon>Orthoherpesviridae</taxon>
        <taxon>Alphaherpesvirinae</taxon>
        <taxon>Varicellovirus</taxon>
        <taxon>Varicellovirus equidalpha1</taxon>
        <taxon>Equid alphaherpesvirus 1</taxon>
    </lineage>
</organism>
<name>MB43_EHV1B</name>
<accession>P28959</accession>
<accession>Q6S6Q4</accession>
<reference key="1">
    <citation type="journal article" date="1992" name="Virology">
        <title>The DNA sequence of equine herpesvirus-1.</title>
        <authorList>
            <person name="Telford E.A.R."/>
            <person name="Watson M.S."/>
            <person name="McBride K."/>
            <person name="Davison A.J."/>
        </authorList>
    </citation>
    <scope>NUCLEOTIDE SEQUENCE [LARGE SCALE GENOMIC DNA]</scope>
</reference>
<feature type="chain" id="PRO_0000116082" description="Membrane protein UL43 homolog">
    <location>
        <begin position="1"/>
        <end position="401"/>
    </location>
</feature>
<feature type="transmembrane region" description="Helical" evidence="1">
    <location>
        <begin position="43"/>
        <end position="63"/>
    </location>
</feature>
<feature type="transmembrane region" description="Helical" evidence="1">
    <location>
        <begin position="67"/>
        <end position="87"/>
    </location>
</feature>
<feature type="transmembrane region" description="Helical" evidence="1">
    <location>
        <begin position="93"/>
        <end position="113"/>
    </location>
</feature>
<feature type="transmembrane region" description="Helical" evidence="1">
    <location>
        <begin position="124"/>
        <end position="144"/>
    </location>
</feature>
<feature type="transmembrane region" description="Helical" evidence="1">
    <location>
        <begin position="159"/>
        <end position="179"/>
    </location>
</feature>
<feature type="transmembrane region" description="Helical" evidence="1">
    <location>
        <begin position="182"/>
        <end position="202"/>
    </location>
</feature>
<feature type="transmembrane region" description="Helical" evidence="1">
    <location>
        <begin position="259"/>
        <end position="279"/>
    </location>
</feature>
<feature type="transmembrane region" description="Helical" evidence="1">
    <location>
        <begin position="294"/>
        <end position="314"/>
    </location>
</feature>
<feature type="transmembrane region" description="Helical" evidence="1">
    <location>
        <begin position="332"/>
        <end position="352"/>
    </location>
</feature>
<feature type="transmembrane region" description="Helical" evidence="1">
    <location>
        <begin position="379"/>
        <end position="399"/>
    </location>
</feature>
<protein>
    <recommendedName>
        <fullName>Membrane protein UL43 homolog</fullName>
    </recommendedName>
    <alternativeName>
        <fullName>Membrane protein ORF17</fullName>
    </alternativeName>
</protein>
<dbReference type="EMBL" id="AY665713">
    <property type="protein sequence ID" value="AAT67274.1"/>
    <property type="molecule type" value="Genomic_DNA"/>
</dbReference>
<dbReference type="PIR" id="I36796">
    <property type="entry name" value="WZBEB1"/>
</dbReference>
<dbReference type="KEGG" id="vg:1487562"/>
<dbReference type="Proteomes" id="UP000001189">
    <property type="component" value="Segment"/>
</dbReference>
<dbReference type="GO" id="GO:0016020">
    <property type="term" value="C:membrane"/>
    <property type="evidence" value="ECO:0007669"/>
    <property type="project" value="UniProtKB-SubCell"/>
</dbReference>
<dbReference type="GO" id="GO:0019033">
    <property type="term" value="C:viral tegument"/>
    <property type="evidence" value="ECO:0007669"/>
    <property type="project" value="InterPro"/>
</dbReference>
<dbReference type="InterPro" id="IPR007764">
    <property type="entry name" value="Herpes_UL43"/>
</dbReference>
<dbReference type="Pfam" id="PF05072">
    <property type="entry name" value="Herpes_UL43"/>
    <property type="match status" value="1"/>
</dbReference>
<gene>
    <name type="ordered locus">17</name>
</gene>
<sequence length="401" mass="43205">MMYQPDREPGEDSCLVLSSSSVQRCTGSQRGCMPCTWAASKAFVGIGLQACVLTSSILHIDLLTRNSTCLILMIISMYVLSLIRVPISKMETIVTVCRSIQALATLVAASVWVAGSAVKKEHLLIVVTVCILFVFIAGTQISLFYVICSANGTGTHFRASLLAIIGGCVLGVSVKLVELKDVPIGIGIAIAIIASCQDFGLALRDTCHYRIGRYACMRTFTDLGRGINYRWVTDVEAVPKIEEVAEEKVSLFKFFKEMPGVIFSPAVGTHATPIIWIVLRLVYGISNVWQTPAYVVFCLTVGHVSAMLLEQLVIRVNYTAEASSGIHSTAHAVCMVLAAFGYGVAAPLSLAFTVSGGILGALYLRKRATGARRLAATHISRWLIVCVYVAAGLCYATIITH</sequence>
<organismHost>
    <name type="scientific">Equus caballus</name>
    <name type="common">Horse</name>
    <dbReference type="NCBI Taxonomy" id="9796"/>
</organismHost>
<comment type="subcellular location">
    <subcellularLocation>
        <location evidence="2">Membrane</location>
        <topology evidence="2">Multi-pass membrane protein</topology>
    </subcellularLocation>
</comment>
<comment type="similarity">
    <text evidence="2">Belongs to the alphaherpesvirinae HHV-1 UL43 family.</text>
</comment>
<keyword id="KW-0472">Membrane</keyword>
<keyword id="KW-1185">Reference proteome</keyword>
<keyword id="KW-0812">Transmembrane</keyword>
<keyword id="KW-1133">Transmembrane helix</keyword>
<evidence type="ECO:0000255" key="1"/>
<evidence type="ECO:0000305" key="2"/>
<proteinExistence type="inferred from homology"/>